<reference key="1">
    <citation type="journal article" date="2006" name="Proc. Natl. Acad. Sci. U.S.A.">
        <title>Burkholderia xenovorans LB400 harbors a multi-replicon, 9.73-Mbp genome shaped for versatility.</title>
        <authorList>
            <person name="Chain P.S.G."/>
            <person name="Denef V.J."/>
            <person name="Konstantinidis K.T."/>
            <person name="Vergez L.M."/>
            <person name="Agullo L."/>
            <person name="Reyes V.L."/>
            <person name="Hauser L."/>
            <person name="Cordova M."/>
            <person name="Gomez L."/>
            <person name="Gonzalez M."/>
            <person name="Land M."/>
            <person name="Lao V."/>
            <person name="Larimer F."/>
            <person name="LiPuma J.J."/>
            <person name="Mahenthiralingam E."/>
            <person name="Malfatti S.A."/>
            <person name="Marx C.J."/>
            <person name="Parnell J.J."/>
            <person name="Ramette A."/>
            <person name="Richardson P."/>
            <person name="Seeger M."/>
            <person name="Smith D."/>
            <person name="Spilker T."/>
            <person name="Sul W.J."/>
            <person name="Tsoi T.V."/>
            <person name="Ulrich L.E."/>
            <person name="Zhulin I.B."/>
            <person name="Tiedje J.M."/>
        </authorList>
    </citation>
    <scope>NUCLEOTIDE SEQUENCE [LARGE SCALE GENOMIC DNA]</scope>
    <source>
        <strain>LB400</strain>
    </source>
</reference>
<comment type="function">
    <text evidence="2">Catalyzes the formation of N(7)-methylguanine at position 46 (m7G46) in tRNA.</text>
</comment>
<comment type="catalytic activity">
    <reaction evidence="2">
        <text>guanosine(46) in tRNA + S-adenosyl-L-methionine = N(7)-methylguanosine(46) in tRNA + S-adenosyl-L-homocysteine</text>
        <dbReference type="Rhea" id="RHEA:42708"/>
        <dbReference type="Rhea" id="RHEA-COMP:10188"/>
        <dbReference type="Rhea" id="RHEA-COMP:10189"/>
        <dbReference type="ChEBI" id="CHEBI:57856"/>
        <dbReference type="ChEBI" id="CHEBI:59789"/>
        <dbReference type="ChEBI" id="CHEBI:74269"/>
        <dbReference type="ChEBI" id="CHEBI:74480"/>
        <dbReference type="EC" id="2.1.1.33"/>
    </reaction>
</comment>
<comment type="pathway">
    <text evidence="2">tRNA modification; N(7)-methylguanine-tRNA biosynthesis.</text>
</comment>
<comment type="similarity">
    <text evidence="2">Belongs to the class I-like SAM-binding methyltransferase superfamily. TrmB family.</text>
</comment>
<comment type="sequence caution" evidence="4">
    <conflict type="erroneous initiation">
        <sequence resource="EMBL-CDS" id="ABE32075"/>
    </conflict>
</comment>
<dbReference type="EC" id="2.1.1.33" evidence="2"/>
<dbReference type="EMBL" id="CP000270">
    <property type="protein sequence ID" value="ABE32075.1"/>
    <property type="status" value="ALT_INIT"/>
    <property type="molecule type" value="Genomic_DNA"/>
</dbReference>
<dbReference type="RefSeq" id="WP_038457415.1">
    <property type="nucleotide sequence ID" value="NC_007951.1"/>
</dbReference>
<dbReference type="SMR" id="Q13V14"/>
<dbReference type="STRING" id="266265.Bxe_A0859"/>
<dbReference type="KEGG" id="bxb:DR64_3024"/>
<dbReference type="KEGG" id="bxe:Bxe_A0859"/>
<dbReference type="PATRIC" id="fig|266265.5.peg.3723"/>
<dbReference type="eggNOG" id="COG0220">
    <property type="taxonomic scope" value="Bacteria"/>
</dbReference>
<dbReference type="OrthoDB" id="9802090at2"/>
<dbReference type="UniPathway" id="UPA00989"/>
<dbReference type="Proteomes" id="UP000001817">
    <property type="component" value="Chromosome 1"/>
</dbReference>
<dbReference type="GO" id="GO:0043527">
    <property type="term" value="C:tRNA methyltransferase complex"/>
    <property type="evidence" value="ECO:0007669"/>
    <property type="project" value="TreeGrafter"/>
</dbReference>
<dbReference type="GO" id="GO:0008176">
    <property type="term" value="F:tRNA (guanine(46)-N7)-methyltransferase activity"/>
    <property type="evidence" value="ECO:0007669"/>
    <property type="project" value="UniProtKB-UniRule"/>
</dbReference>
<dbReference type="CDD" id="cd02440">
    <property type="entry name" value="AdoMet_MTases"/>
    <property type="match status" value="1"/>
</dbReference>
<dbReference type="FunFam" id="3.40.50.150:FF:000035">
    <property type="entry name" value="tRNA (guanine-N(7)-)-methyltransferase"/>
    <property type="match status" value="1"/>
</dbReference>
<dbReference type="Gene3D" id="3.40.50.150">
    <property type="entry name" value="Vaccinia Virus protein VP39"/>
    <property type="match status" value="1"/>
</dbReference>
<dbReference type="HAMAP" id="MF_01057">
    <property type="entry name" value="tRNA_methyltr_TrmB"/>
    <property type="match status" value="1"/>
</dbReference>
<dbReference type="InterPro" id="IPR029063">
    <property type="entry name" value="SAM-dependent_MTases_sf"/>
</dbReference>
<dbReference type="InterPro" id="IPR003358">
    <property type="entry name" value="tRNA_(Gua-N-7)_MeTrfase_Trmb"/>
</dbReference>
<dbReference type="InterPro" id="IPR055361">
    <property type="entry name" value="tRNA_methyltr_TrmB_bact"/>
</dbReference>
<dbReference type="NCBIfam" id="TIGR00091">
    <property type="entry name" value="tRNA (guanosine(46)-N7)-methyltransferase TrmB"/>
    <property type="match status" value="1"/>
</dbReference>
<dbReference type="PANTHER" id="PTHR23417">
    <property type="entry name" value="3-DEOXY-D-MANNO-OCTULOSONIC-ACID TRANSFERASE/TRNA GUANINE-N 7 - -METHYLTRANSFERASE"/>
    <property type="match status" value="1"/>
</dbReference>
<dbReference type="PANTHER" id="PTHR23417:SF14">
    <property type="entry name" value="PENTACOTRIPEPTIDE-REPEAT REGION OF PRORP DOMAIN-CONTAINING PROTEIN"/>
    <property type="match status" value="1"/>
</dbReference>
<dbReference type="Pfam" id="PF02390">
    <property type="entry name" value="Methyltransf_4"/>
    <property type="match status" value="1"/>
</dbReference>
<dbReference type="SUPFAM" id="SSF53335">
    <property type="entry name" value="S-adenosyl-L-methionine-dependent methyltransferases"/>
    <property type="match status" value="1"/>
</dbReference>
<dbReference type="PROSITE" id="PS51625">
    <property type="entry name" value="SAM_MT_TRMB"/>
    <property type="match status" value="1"/>
</dbReference>
<feature type="chain" id="PRO_0000288131" description="tRNA (guanine-N(7)-)-methyltransferase">
    <location>
        <begin position="1"/>
        <end position="260"/>
    </location>
</feature>
<feature type="region of interest" description="Disordered" evidence="3">
    <location>
        <begin position="1"/>
        <end position="37"/>
    </location>
</feature>
<feature type="active site" evidence="1">
    <location>
        <position position="165"/>
    </location>
</feature>
<feature type="binding site" evidence="2">
    <location>
        <position position="90"/>
    </location>
    <ligand>
        <name>S-adenosyl-L-methionine</name>
        <dbReference type="ChEBI" id="CHEBI:59789"/>
    </ligand>
</feature>
<feature type="binding site" evidence="2">
    <location>
        <position position="115"/>
    </location>
    <ligand>
        <name>S-adenosyl-L-methionine</name>
        <dbReference type="ChEBI" id="CHEBI:59789"/>
    </ligand>
</feature>
<feature type="binding site" evidence="2">
    <location>
        <position position="142"/>
    </location>
    <ligand>
        <name>S-adenosyl-L-methionine</name>
        <dbReference type="ChEBI" id="CHEBI:59789"/>
    </ligand>
</feature>
<feature type="binding site" evidence="2">
    <location>
        <position position="165"/>
    </location>
    <ligand>
        <name>S-adenosyl-L-methionine</name>
        <dbReference type="ChEBI" id="CHEBI:59789"/>
    </ligand>
</feature>
<feature type="binding site" evidence="2">
    <location>
        <position position="169"/>
    </location>
    <ligand>
        <name>substrate</name>
    </ligand>
</feature>
<feature type="binding site" evidence="2">
    <location>
        <position position="201"/>
    </location>
    <ligand>
        <name>substrate</name>
    </ligand>
</feature>
<feature type="binding site" evidence="2">
    <location>
        <begin position="236"/>
        <end position="239"/>
    </location>
    <ligand>
        <name>substrate</name>
    </ligand>
</feature>
<organism>
    <name type="scientific">Paraburkholderia xenovorans (strain LB400)</name>
    <dbReference type="NCBI Taxonomy" id="266265"/>
    <lineage>
        <taxon>Bacteria</taxon>
        <taxon>Pseudomonadati</taxon>
        <taxon>Pseudomonadota</taxon>
        <taxon>Betaproteobacteria</taxon>
        <taxon>Burkholderiales</taxon>
        <taxon>Burkholderiaceae</taxon>
        <taxon>Paraburkholderia</taxon>
    </lineage>
</organism>
<accession>Q13V14</accession>
<gene>
    <name evidence="2" type="primary">trmB</name>
    <name type="ordered locus">Bxeno_A3537</name>
    <name type="ORF">Bxe_A0859</name>
</gene>
<sequence>MIHDPNDAGLPDQLPTPSSEAENSPAGDTTPPEEALHRRRIRSFVTRAGRVSTGQRRAMDELGPRFVVPFAPQQPDWNSVFGREAPRVLEIGFGMGATTAEIASHRPDEDFLGVEVHEPGVGALLKLMGEQNLSNIRIIQHDAVEVLEQMIAPDSLDGVHIFFPDPWHKARHHKRRLIQPKFVALLVSRLKPGAYLHCATDWQNYAEQMLEVLGAEPSLKNTADGYAPRPEYRPVTKFERRGLRLGHGVWDLVFRKRGAG</sequence>
<name>TRMB_PARXL</name>
<keyword id="KW-0489">Methyltransferase</keyword>
<keyword id="KW-1185">Reference proteome</keyword>
<keyword id="KW-0949">S-adenosyl-L-methionine</keyword>
<keyword id="KW-0808">Transferase</keyword>
<keyword id="KW-0819">tRNA processing</keyword>
<evidence type="ECO:0000250" key="1"/>
<evidence type="ECO:0000255" key="2">
    <source>
        <dbReference type="HAMAP-Rule" id="MF_01057"/>
    </source>
</evidence>
<evidence type="ECO:0000256" key="3">
    <source>
        <dbReference type="SAM" id="MobiDB-lite"/>
    </source>
</evidence>
<evidence type="ECO:0000305" key="4"/>
<protein>
    <recommendedName>
        <fullName evidence="2">tRNA (guanine-N(7)-)-methyltransferase</fullName>
        <ecNumber evidence="2">2.1.1.33</ecNumber>
    </recommendedName>
    <alternativeName>
        <fullName evidence="2">tRNA (guanine(46)-N(7))-methyltransferase</fullName>
    </alternativeName>
    <alternativeName>
        <fullName evidence="2">tRNA(m7G46)-methyltransferase</fullName>
    </alternativeName>
</protein>
<proteinExistence type="inferred from homology"/>